<comment type="function">
    <text evidence="1">Catalyzes the attachment of glutamate to tRNA(Glu) in a two-step reaction: glutamate is first activated by ATP to form Glu-AMP and then transferred to the acceptor end of tRNA(Glu).</text>
</comment>
<comment type="catalytic activity">
    <reaction evidence="1">
        <text>tRNA(Glu) + L-glutamate + ATP = L-glutamyl-tRNA(Glu) + AMP + diphosphate</text>
        <dbReference type="Rhea" id="RHEA:23540"/>
        <dbReference type="Rhea" id="RHEA-COMP:9663"/>
        <dbReference type="Rhea" id="RHEA-COMP:9680"/>
        <dbReference type="ChEBI" id="CHEBI:29985"/>
        <dbReference type="ChEBI" id="CHEBI:30616"/>
        <dbReference type="ChEBI" id="CHEBI:33019"/>
        <dbReference type="ChEBI" id="CHEBI:78442"/>
        <dbReference type="ChEBI" id="CHEBI:78520"/>
        <dbReference type="ChEBI" id="CHEBI:456215"/>
        <dbReference type="EC" id="6.1.1.17"/>
    </reaction>
</comment>
<comment type="cofactor">
    <cofactor evidence="1">
        <name>Zn(2+)</name>
        <dbReference type="ChEBI" id="CHEBI:29105"/>
    </cofactor>
    <text evidence="1">Binds 1 zinc ion per subunit.</text>
</comment>
<comment type="subunit">
    <text evidence="1">Monomer.</text>
</comment>
<comment type="subcellular location">
    <subcellularLocation>
        <location evidence="1">Cytoplasm</location>
    </subcellularLocation>
</comment>
<comment type="similarity">
    <text evidence="1">Belongs to the class-I aminoacyl-tRNA synthetase family. Glutamate--tRNA ligase type 1 subfamily.</text>
</comment>
<evidence type="ECO:0000255" key="1">
    <source>
        <dbReference type="HAMAP-Rule" id="MF_00022"/>
    </source>
</evidence>
<dbReference type="EC" id="6.1.1.17" evidence="1"/>
<dbReference type="EMBL" id="CP000821">
    <property type="protein sequence ID" value="ABV37513.1"/>
    <property type="molecule type" value="Genomic_DNA"/>
</dbReference>
<dbReference type="RefSeq" id="WP_012143243.1">
    <property type="nucleotide sequence ID" value="NC_009831.1"/>
</dbReference>
<dbReference type="SMR" id="A8FXE0"/>
<dbReference type="STRING" id="425104.Ssed_2906"/>
<dbReference type="KEGG" id="sse:Ssed_2906"/>
<dbReference type="eggNOG" id="COG0008">
    <property type="taxonomic scope" value="Bacteria"/>
</dbReference>
<dbReference type="HOGENOM" id="CLU_015768_6_0_6"/>
<dbReference type="OrthoDB" id="9807503at2"/>
<dbReference type="Proteomes" id="UP000002015">
    <property type="component" value="Chromosome"/>
</dbReference>
<dbReference type="GO" id="GO:0005829">
    <property type="term" value="C:cytosol"/>
    <property type="evidence" value="ECO:0007669"/>
    <property type="project" value="TreeGrafter"/>
</dbReference>
<dbReference type="GO" id="GO:0005524">
    <property type="term" value="F:ATP binding"/>
    <property type="evidence" value="ECO:0007669"/>
    <property type="project" value="UniProtKB-UniRule"/>
</dbReference>
<dbReference type="GO" id="GO:0004818">
    <property type="term" value="F:glutamate-tRNA ligase activity"/>
    <property type="evidence" value="ECO:0007669"/>
    <property type="project" value="UniProtKB-UniRule"/>
</dbReference>
<dbReference type="GO" id="GO:0000049">
    <property type="term" value="F:tRNA binding"/>
    <property type="evidence" value="ECO:0007669"/>
    <property type="project" value="InterPro"/>
</dbReference>
<dbReference type="GO" id="GO:0008270">
    <property type="term" value="F:zinc ion binding"/>
    <property type="evidence" value="ECO:0007669"/>
    <property type="project" value="UniProtKB-UniRule"/>
</dbReference>
<dbReference type="GO" id="GO:0006424">
    <property type="term" value="P:glutamyl-tRNA aminoacylation"/>
    <property type="evidence" value="ECO:0007669"/>
    <property type="project" value="UniProtKB-UniRule"/>
</dbReference>
<dbReference type="CDD" id="cd00808">
    <property type="entry name" value="GluRS_core"/>
    <property type="match status" value="1"/>
</dbReference>
<dbReference type="FunFam" id="1.10.10.350:FF:000001">
    <property type="entry name" value="Glutamate--tRNA ligase"/>
    <property type="match status" value="1"/>
</dbReference>
<dbReference type="FunFam" id="3.40.50.620:FF:000007">
    <property type="entry name" value="Glutamate--tRNA ligase"/>
    <property type="match status" value="1"/>
</dbReference>
<dbReference type="Gene3D" id="1.10.10.350">
    <property type="match status" value="1"/>
</dbReference>
<dbReference type="Gene3D" id="3.40.50.620">
    <property type="entry name" value="HUPs"/>
    <property type="match status" value="1"/>
</dbReference>
<dbReference type="HAMAP" id="MF_00022">
    <property type="entry name" value="Glu_tRNA_synth_type1"/>
    <property type="match status" value="1"/>
</dbReference>
<dbReference type="InterPro" id="IPR045462">
    <property type="entry name" value="aa-tRNA-synth_I_cd-bd"/>
</dbReference>
<dbReference type="InterPro" id="IPR020751">
    <property type="entry name" value="aa-tRNA-synth_I_codon-bd_sub2"/>
</dbReference>
<dbReference type="InterPro" id="IPR001412">
    <property type="entry name" value="aa-tRNA-synth_I_CS"/>
</dbReference>
<dbReference type="InterPro" id="IPR008925">
    <property type="entry name" value="aa_tRNA-synth_I_cd-bd_sf"/>
</dbReference>
<dbReference type="InterPro" id="IPR004527">
    <property type="entry name" value="Glu-tRNA-ligase_bac/mito"/>
</dbReference>
<dbReference type="InterPro" id="IPR000924">
    <property type="entry name" value="Glu/Gln-tRNA-synth"/>
</dbReference>
<dbReference type="InterPro" id="IPR020058">
    <property type="entry name" value="Glu/Gln-tRNA-synth_Ib_cat-dom"/>
</dbReference>
<dbReference type="InterPro" id="IPR049940">
    <property type="entry name" value="GluQ/Sye"/>
</dbReference>
<dbReference type="InterPro" id="IPR033910">
    <property type="entry name" value="GluRS_core"/>
</dbReference>
<dbReference type="InterPro" id="IPR014729">
    <property type="entry name" value="Rossmann-like_a/b/a_fold"/>
</dbReference>
<dbReference type="NCBIfam" id="TIGR00464">
    <property type="entry name" value="gltX_bact"/>
    <property type="match status" value="1"/>
</dbReference>
<dbReference type="PANTHER" id="PTHR43311">
    <property type="entry name" value="GLUTAMATE--TRNA LIGASE"/>
    <property type="match status" value="1"/>
</dbReference>
<dbReference type="PANTHER" id="PTHR43311:SF2">
    <property type="entry name" value="GLUTAMATE--TRNA LIGASE, MITOCHONDRIAL-RELATED"/>
    <property type="match status" value="1"/>
</dbReference>
<dbReference type="Pfam" id="PF19269">
    <property type="entry name" value="Anticodon_2"/>
    <property type="match status" value="1"/>
</dbReference>
<dbReference type="Pfam" id="PF00749">
    <property type="entry name" value="tRNA-synt_1c"/>
    <property type="match status" value="1"/>
</dbReference>
<dbReference type="PRINTS" id="PR00987">
    <property type="entry name" value="TRNASYNTHGLU"/>
</dbReference>
<dbReference type="SUPFAM" id="SSF48163">
    <property type="entry name" value="An anticodon-binding domain of class I aminoacyl-tRNA synthetases"/>
    <property type="match status" value="1"/>
</dbReference>
<dbReference type="SUPFAM" id="SSF52374">
    <property type="entry name" value="Nucleotidylyl transferase"/>
    <property type="match status" value="1"/>
</dbReference>
<dbReference type="PROSITE" id="PS00178">
    <property type="entry name" value="AA_TRNA_LIGASE_I"/>
    <property type="match status" value="1"/>
</dbReference>
<name>SYE_SHESH</name>
<organism>
    <name type="scientific">Shewanella sediminis (strain HAW-EB3)</name>
    <dbReference type="NCBI Taxonomy" id="425104"/>
    <lineage>
        <taxon>Bacteria</taxon>
        <taxon>Pseudomonadati</taxon>
        <taxon>Pseudomonadota</taxon>
        <taxon>Gammaproteobacteria</taxon>
        <taxon>Alteromonadales</taxon>
        <taxon>Shewanellaceae</taxon>
        <taxon>Shewanella</taxon>
    </lineage>
</organism>
<proteinExistence type="inferred from homology"/>
<gene>
    <name evidence="1" type="primary">gltX</name>
    <name type="ordered locus">Ssed_2906</name>
</gene>
<protein>
    <recommendedName>
        <fullName evidence="1">Glutamate--tRNA ligase</fullName>
        <ecNumber evidence="1">6.1.1.17</ecNumber>
    </recommendedName>
    <alternativeName>
        <fullName evidence="1">Glutamyl-tRNA synthetase</fullName>
        <shortName evidence="1">GluRS</shortName>
    </alternativeName>
</protein>
<keyword id="KW-0030">Aminoacyl-tRNA synthetase</keyword>
<keyword id="KW-0067">ATP-binding</keyword>
<keyword id="KW-0963">Cytoplasm</keyword>
<keyword id="KW-0436">Ligase</keyword>
<keyword id="KW-0479">Metal-binding</keyword>
<keyword id="KW-0547">Nucleotide-binding</keyword>
<keyword id="KW-0648">Protein biosynthesis</keyword>
<keyword id="KW-1185">Reference proteome</keyword>
<keyword id="KW-0862">Zinc</keyword>
<reference key="1">
    <citation type="submission" date="2007-08" db="EMBL/GenBank/DDBJ databases">
        <title>Complete sequence of Shewanella sediminis HAW-EB3.</title>
        <authorList>
            <consortium name="US DOE Joint Genome Institute"/>
            <person name="Copeland A."/>
            <person name="Lucas S."/>
            <person name="Lapidus A."/>
            <person name="Barry K."/>
            <person name="Glavina del Rio T."/>
            <person name="Dalin E."/>
            <person name="Tice H."/>
            <person name="Pitluck S."/>
            <person name="Chertkov O."/>
            <person name="Brettin T."/>
            <person name="Bruce D."/>
            <person name="Detter J.C."/>
            <person name="Han C."/>
            <person name="Schmutz J."/>
            <person name="Larimer F."/>
            <person name="Land M."/>
            <person name="Hauser L."/>
            <person name="Kyrpides N."/>
            <person name="Kim E."/>
            <person name="Zhao J.-S."/>
            <person name="Richardson P."/>
        </authorList>
    </citation>
    <scope>NUCLEOTIDE SEQUENCE [LARGE SCALE GENOMIC DNA]</scope>
    <source>
        <strain>HAW-EB3</strain>
    </source>
</reference>
<feature type="chain" id="PRO_1000074335" description="Glutamate--tRNA ligase">
    <location>
        <begin position="1"/>
        <end position="469"/>
    </location>
</feature>
<feature type="short sequence motif" description="'HIGH' region" evidence="1">
    <location>
        <begin position="9"/>
        <end position="19"/>
    </location>
</feature>
<feature type="short sequence motif" description="'KMSKS' region" evidence="1">
    <location>
        <begin position="236"/>
        <end position="240"/>
    </location>
</feature>
<feature type="binding site" evidence="1">
    <location>
        <position position="98"/>
    </location>
    <ligand>
        <name>Zn(2+)</name>
        <dbReference type="ChEBI" id="CHEBI:29105"/>
    </ligand>
</feature>
<feature type="binding site" evidence="1">
    <location>
        <position position="100"/>
    </location>
    <ligand>
        <name>Zn(2+)</name>
        <dbReference type="ChEBI" id="CHEBI:29105"/>
    </ligand>
</feature>
<feature type="binding site" evidence="1">
    <location>
        <position position="125"/>
    </location>
    <ligand>
        <name>Zn(2+)</name>
        <dbReference type="ChEBI" id="CHEBI:29105"/>
    </ligand>
</feature>
<feature type="binding site" evidence="1">
    <location>
        <position position="127"/>
    </location>
    <ligand>
        <name>Zn(2+)</name>
        <dbReference type="ChEBI" id="CHEBI:29105"/>
    </ligand>
</feature>
<feature type="binding site" evidence="1">
    <location>
        <position position="239"/>
    </location>
    <ligand>
        <name>ATP</name>
        <dbReference type="ChEBI" id="CHEBI:30616"/>
    </ligand>
</feature>
<sequence length="469" mass="52865">MTTKTRFAPSPTGFLHVGGARTALYSWLYARANQGEFVLRVEDTDIERSTPEACEAILEGMQWLGLNWDEGPYYQTKRFDRYNEIIAQMLEQGTAYKCYCSRERIETMRDEQAAKGEQQKYDGCCRDKAPRDTDEPFVIRFKNPTEGSVVFDDHVRGRIEISNDLLDDLIIARTEGTPTYNFCVVVDDWDMGITCVVRGEDHINNTPRQINILKALGAPIPEYAHVAMILGDDGAKLSKRHGAVGVMQYRDDGYLPEALLNYLVRLGWSHGDQEVFSIDEMKQLFKLDDINKAASAFNTEKLNWLNQHYIKELDPEYVAKHLEWHMADQKIDTSNGPALSAVVTALSERAKTLKELAASSRYFYEDFAEFDATAAKKHLRGVAMEPLELVQKKLAELSEWTLEGIHQAIEDTATELEVGMGKVGMPLRVAVTGAGMSPAVDLTLFLVGKARCEQRISKAIEFVANRINS</sequence>
<accession>A8FXE0</accession>